<reference key="1">
    <citation type="journal article" date="2009" name="Genome Biol.">
        <title>Genomic and genetic analyses of diversity and plant interactions of Pseudomonas fluorescens.</title>
        <authorList>
            <person name="Silby M.W."/>
            <person name="Cerdeno-Tarraga A.M."/>
            <person name="Vernikos G.S."/>
            <person name="Giddens S.R."/>
            <person name="Jackson R.W."/>
            <person name="Preston G.M."/>
            <person name="Zhang X.-X."/>
            <person name="Moon C.D."/>
            <person name="Gehrig S.M."/>
            <person name="Godfrey S.A.C."/>
            <person name="Knight C.G."/>
            <person name="Malone J.G."/>
            <person name="Robinson Z."/>
            <person name="Spiers A.J."/>
            <person name="Harris S."/>
            <person name="Challis G.L."/>
            <person name="Yaxley A.M."/>
            <person name="Harris D."/>
            <person name="Seeger K."/>
            <person name="Murphy L."/>
            <person name="Rutter S."/>
            <person name="Squares R."/>
            <person name="Quail M.A."/>
            <person name="Saunders E."/>
            <person name="Mavromatis K."/>
            <person name="Brettin T.S."/>
            <person name="Bentley S.D."/>
            <person name="Hothersall J."/>
            <person name="Stephens E."/>
            <person name="Thomas C.M."/>
            <person name="Parkhill J."/>
            <person name="Levy S.B."/>
            <person name="Rainey P.B."/>
            <person name="Thomson N.R."/>
        </authorList>
    </citation>
    <scope>NUCLEOTIDE SEQUENCE [LARGE SCALE GENOMIC DNA]</scope>
    <source>
        <strain>Pf0-1</strain>
    </source>
</reference>
<sequence length="109" mass="11854">MSQGIEFNRLMMDMKAMQMDAMSKPKSTSAVPEVAGSNFSDMLGQAINKVNDTQQASSQLANAFEIGKSGVDLTDVMIASQKASVSFQALTQVRNKLVQAYQDIMQMPV</sequence>
<proteinExistence type="inferred from homology"/>
<comment type="subcellular location">
    <subcellularLocation>
        <location evidence="1">Bacterial flagellum basal body</location>
    </subcellularLocation>
</comment>
<comment type="similarity">
    <text evidence="1">Belongs to the FliE family.</text>
</comment>
<organism>
    <name type="scientific">Pseudomonas fluorescens (strain Pf0-1)</name>
    <dbReference type="NCBI Taxonomy" id="205922"/>
    <lineage>
        <taxon>Bacteria</taxon>
        <taxon>Pseudomonadati</taxon>
        <taxon>Pseudomonadota</taxon>
        <taxon>Gammaproteobacteria</taxon>
        <taxon>Pseudomonadales</taxon>
        <taxon>Pseudomonadaceae</taxon>
        <taxon>Pseudomonas</taxon>
    </lineage>
</organism>
<keyword id="KW-0975">Bacterial flagellum</keyword>
<accession>Q3KG28</accession>
<gene>
    <name evidence="1" type="primary">fliE</name>
    <name type="ordered locus">Pfl01_1535</name>
</gene>
<feature type="chain" id="PRO_1000045869" description="Flagellar hook-basal body complex protein FliE">
    <location>
        <begin position="1"/>
        <end position="109"/>
    </location>
</feature>
<name>FLIE_PSEPF</name>
<dbReference type="EMBL" id="CP000094">
    <property type="protein sequence ID" value="ABA73278.1"/>
    <property type="molecule type" value="Genomic_DNA"/>
</dbReference>
<dbReference type="RefSeq" id="WP_011333048.1">
    <property type="nucleotide sequence ID" value="NC_007492.2"/>
</dbReference>
<dbReference type="SMR" id="Q3KG28"/>
<dbReference type="KEGG" id="pfo:Pfl01_1535"/>
<dbReference type="eggNOG" id="COG1677">
    <property type="taxonomic scope" value="Bacteria"/>
</dbReference>
<dbReference type="HOGENOM" id="CLU_147249_0_0_6"/>
<dbReference type="Proteomes" id="UP000002704">
    <property type="component" value="Chromosome"/>
</dbReference>
<dbReference type="GO" id="GO:0009425">
    <property type="term" value="C:bacterial-type flagellum basal body"/>
    <property type="evidence" value="ECO:0007669"/>
    <property type="project" value="UniProtKB-SubCell"/>
</dbReference>
<dbReference type="GO" id="GO:0003774">
    <property type="term" value="F:cytoskeletal motor activity"/>
    <property type="evidence" value="ECO:0007669"/>
    <property type="project" value="InterPro"/>
</dbReference>
<dbReference type="GO" id="GO:0005198">
    <property type="term" value="F:structural molecule activity"/>
    <property type="evidence" value="ECO:0007669"/>
    <property type="project" value="InterPro"/>
</dbReference>
<dbReference type="GO" id="GO:0071973">
    <property type="term" value="P:bacterial-type flagellum-dependent cell motility"/>
    <property type="evidence" value="ECO:0007669"/>
    <property type="project" value="InterPro"/>
</dbReference>
<dbReference type="HAMAP" id="MF_00724">
    <property type="entry name" value="FliE"/>
    <property type="match status" value="1"/>
</dbReference>
<dbReference type="InterPro" id="IPR001624">
    <property type="entry name" value="FliE"/>
</dbReference>
<dbReference type="NCBIfam" id="TIGR00205">
    <property type="entry name" value="fliE"/>
    <property type="match status" value="1"/>
</dbReference>
<dbReference type="PANTHER" id="PTHR34653">
    <property type="match status" value="1"/>
</dbReference>
<dbReference type="PANTHER" id="PTHR34653:SF1">
    <property type="entry name" value="FLAGELLAR HOOK-BASAL BODY COMPLEX PROTEIN FLIE"/>
    <property type="match status" value="1"/>
</dbReference>
<dbReference type="Pfam" id="PF02049">
    <property type="entry name" value="FliE"/>
    <property type="match status" value="1"/>
</dbReference>
<dbReference type="PRINTS" id="PR01006">
    <property type="entry name" value="FLGHOOKFLIE"/>
</dbReference>
<evidence type="ECO:0000255" key="1">
    <source>
        <dbReference type="HAMAP-Rule" id="MF_00724"/>
    </source>
</evidence>
<protein>
    <recommendedName>
        <fullName evidence="1">Flagellar hook-basal body complex protein FliE</fullName>
    </recommendedName>
</protein>